<comment type="function">
    <text evidence="1">Involved in the biosynthesis of ADP-glucose, a building block required for the elongation reactions to produce glycogen. Catalyzes the reaction between ATP and alpha-D-glucose 1-phosphate (G1P) to produce pyrophosphate and ADP-Glc.</text>
</comment>
<comment type="catalytic activity">
    <reaction evidence="1">
        <text>alpha-D-glucose 1-phosphate + ATP + H(+) = ADP-alpha-D-glucose + diphosphate</text>
        <dbReference type="Rhea" id="RHEA:12120"/>
        <dbReference type="ChEBI" id="CHEBI:15378"/>
        <dbReference type="ChEBI" id="CHEBI:30616"/>
        <dbReference type="ChEBI" id="CHEBI:33019"/>
        <dbReference type="ChEBI" id="CHEBI:57498"/>
        <dbReference type="ChEBI" id="CHEBI:58601"/>
        <dbReference type="EC" id="2.7.7.27"/>
    </reaction>
</comment>
<comment type="pathway">
    <text evidence="1">Glycan biosynthesis; glycogen biosynthesis.</text>
</comment>
<comment type="subunit">
    <text evidence="1">Homotetramer.</text>
</comment>
<comment type="similarity">
    <text evidence="1">Belongs to the bacterial/plant glucose-1-phosphate adenylyltransferase family.</text>
</comment>
<organism>
    <name type="scientific">Bacillus anthracis</name>
    <dbReference type="NCBI Taxonomy" id="1392"/>
    <lineage>
        <taxon>Bacteria</taxon>
        <taxon>Bacillati</taxon>
        <taxon>Bacillota</taxon>
        <taxon>Bacilli</taxon>
        <taxon>Bacillales</taxon>
        <taxon>Bacillaceae</taxon>
        <taxon>Bacillus</taxon>
        <taxon>Bacillus cereus group</taxon>
    </lineage>
</organism>
<proteinExistence type="inferred from homology"/>
<reference key="1">
    <citation type="journal article" date="2003" name="Nature">
        <title>The genome sequence of Bacillus anthracis Ames and comparison to closely related bacteria.</title>
        <authorList>
            <person name="Read T.D."/>
            <person name="Peterson S.N."/>
            <person name="Tourasse N.J."/>
            <person name="Baillie L.W."/>
            <person name="Paulsen I.T."/>
            <person name="Nelson K.E."/>
            <person name="Tettelin H."/>
            <person name="Fouts D.E."/>
            <person name="Eisen J.A."/>
            <person name="Gill S.R."/>
            <person name="Holtzapple E.K."/>
            <person name="Okstad O.A."/>
            <person name="Helgason E."/>
            <person name="Rilstone J."/>
            <person name="Wu M."/>
            <person name="Kolonay J.F."/>
            <person name="Beanan M.J."/>
            <person name="Dodson R.J."/>
            <person name="Brinkac L.M."/>
            <person name="Gwinn M.L."/>
            <person name="DeBoy R.T."/>
            <person name="Madpu R."/>
            <person name="Daugherty S.C."/>
            <person name="Durkin A.S."/>
            <person name="Haft D.H."/>
            <person name="Nelson W.C."/>
            <person name="Peterson J.D."/>
            <person name="Pop M."/>
            <person name="Khouri H.M."/>
            <person name="Radune D."/>
            <person name="Benton J.L."/>
            <person name="Mahamoud Y."/>
            <person name="Jiang L."/>
            <person name="Hance I.R."/>
            <person name="Weidman J.F."/>
            <person name="Berry K.J."/>
            <person name="Plaut R.D."/>
            <person name="Wolf A.M."/>
            <person name="Watkins K.L."/>
            <person name="Nierman W.C."/>
            <person name="Hazen A."/>
            <person name="Cline R.T."/>
            <person name="Redmond C."/>
            <person name="Thwaite J.E."/>
            <person name="White O."/>
            <person name="Salzberg S.L."/>
            <person name="Thomason B."/>
            <person name="Friedlander A.M."/>
            <person name="Koehler T.M."/>
            <person name="Hanna P.C."/>
            <person name="Kolstoe A.-B."/>
            <person name="Fraser C.M."/>
        </authorList>
    </citation>
    <scope>NUCLEOTIDE SEQUENCE [LARGE SCALE GENOMIC DNA]</scope>
    <source>
        <strain>Ames / isolate Porton</strain>
    </source>
</reference>
<reference key="2">
    <citation type="journal article" date="2009" name="J. Bacteriol.">
        <title>The complete genome sequence of Bacillus anthracis Ames 'Ancestor'.</title>
        <authorList>
            <person name="Ravel J."/>
            <person name="Jiang L."/>
            <person name="Stanley S.T."/>
            <person name="Wilson M.R."/>
            <person name="Decker R.S."/>
            <person name="Read T.D."/>
            <person name="Worsham P."/>
            <person name="Keim P.S."/>
            <person name="Salzberg S.L."/>
            <person name="Fraser-Liggett C.M."/>
            <person name="Rasko D.A."/>
        </authorList>
    </citation>
    <scope>NUCLEOTIDE SEQUENCE [LARGE SCALE GENOMIC DNA]</scope>
    <source>
        <strain>Ames ancestor</strain>
    </source>
</reference>
<reference key="3">
    <citation type="submission" date="2004-01" db="EMBL/GenBank/DDBJ databases">
        <title>Complete genome sequence of Bacillus anthracis Sterne.</title>
        <authorList>
            <person name="Brettin T.S."/>
            <person name="Bruce D."/>
            <person name="Challacombe J.F."/>
            <person name="Gilna P."/>
            <person name="Han C."/>
            <person name="Hill K."/>
            <person name="Hitchcock P."/>
            <person name="Jackson P."/>
            <person name="Keim P."/>
            <person name="Longmire J."/>
            <person name="Lucas S."/>
            <person name="Okinaka R."/>
            <person name="Richardson P."/>
            <person name="Rubin E."/>
            <person name="Tice H."/>
        </authorList>
    </citation>
    <scope>NUCLEOTIDE SEQUENCE [LARGE SCALE GENOMIC DNA]</scope>
    <source>
        <strain>Sterne</strain>
    </source>
</reference>
<protein>
    <recommendedName>
        <fullName evidence="1">Glucose-1-phosphate adenylyltransferase</fullName>
        <ecNumber evidence="1">2.7.7.27</ecNumber>
    </recommendedName>
    <alternativeName>
        <fullName evidence="1">ADP-glucose pyrophosphorylase</fullName>
        <shortName evidence="1">ADPGlc PPase</shortName>
    </alternativeName>
    <alternativeName>
        <fullName evidence="1">ADP-glucose synthase</fullName>
    </alternativeName>
</protein>
<feature type="chain" id="PRO_0000195275" description="Glucose-1-phosphate adenylyltransferase">
    <location>
        <begin position="1"/>
        <end position="376"/>
    </location>
</feature>
<feature type="binding site" evidence="1">
    <location>
        <position position="101"/>
    </location>
    <ligand>
        <name>alpha-D-glucose 1-phosphate</name>
        <dbReference type="ChEBI" id="CHEBI:58601"/>
    </ligand>
</feature>
<feature type="binding site" evidence="1">
    <location>
        <position position="166"/>
    </location>
    <ligand>
        <name>alpha-D-glucose 1-phosphate</name>
        <dbReference type="ChEBI" id="CHEBI:58601"/>
    </ligand>
</feature>
<feature type="binding site" evidence="1">
    <location>
        <begin position="181"/>
        <end position="182"/>
    </location>
    <ligand>
        <name>alpha-D-glucose 1-phosphate</name>
        <dbReference type="ChEBI" id="CHEBI:58601"/>
    </ligand>
</feature>
<feature type="binding site" evidence="1">
    <location>
        <position position="192"/>
    </location>
    <ligand>
        <name>alpha-D-glucose 1-phosphate</name>
        <dbReference type="ChEBI" id="CHEBI:58601"/>
    </ligand>
</feature>
<gene>
    <name evidence="1" type="primary">glgC</name>
    <name type="ordered locus">BA_5122</name>
    <name type="ordered locus">GBAA_5122</name>
    <name type="ordered locus">BAS4760</name>
</gene>
<name>GLGC_BACAN</name>
<accession>Q81K83</accession>
<accession>Q6HRN4</accession>
<accession>Q6KL00</accession>
<sequence length="376" mass="42034">MAQKQKCVAMLLAGGKGSRLSALTKNLAKPAVPFGGKYRIIDFTLSNCANSGIETVGILTQYQPLELHNYIGIGNAWDLDRVSGGVTVLPPYAESSGVKWYTGTASAIYQNLNYLSQYEPEYVLILSGDHIYKMDYSKMLDYHIEKEADVSISVIEVPWDEASRFGIMNTNEEMEIVEFEEKPQFPRSNLASMGIYIFNWAILKEYLEMDARNPESSNDFGKDVLPLLLDEGKKLMAYPFEGYWKDVGTVKSLWEANMDLLRDETSLNLNDRDWRIYSVNPNEPPQYIAEKAKVEESLINEGCVIEGDVKHSVLFQGVTVEEGSMVIDSVVMPGAKIGKNVVIERAIVGSEMVIEDGTIIRPEKNVDDVVLIAEGK</sequence>
<dbReference type="EC" id="2.7.7.27" evidence="1"/>
<dbReference type="EMBL" id="AE016879">
    <property type="protein sequence ID" value="AAP28794.1"/>
    <property type="molecule type" value="Genomic_DNA"/>
</dbReference>
<dbReference type="EMBL" id="AE017334">
    <property type="protein sequence ID" value="AAT34250.1"/>
    <property type="molecule type" value="Genomic_DNA"/>
</dbReference>
<dbReference type="EMBL" id="AE017225">
    <property type="protein sequence ID" value="AAT57054.1"/>
    <property type="molecule type" value="Genomic_DNA"/>
</dbReference>
<dbReference type="RefSeq" id="NP_847308.1">
    <property type="nucleotide sequence ID" value="NC_003997.3"/>
</dbReference>
<dbReference type="RefSeq" id="WP_000057611.1">
    <property type="nucleotide sequence ID" value="NZ_WXXJ01000032.1"/>
</dbReference>
<dbReference type="RefSeq" id="YP_031004.1">
    <property type="nucleotide sequence ID" value="NC_005945.1"/>
</dbReference>
<dbReference type="SMR" id="Q81K83"/>
<dbReference type="IntAct" id="Q81K83">
    <property type="interactions" value="1"/>
</dbReference>
<dbReference type="STRING" id="261594.GBAA_5122"/>
<dbReference type="DNASU" id="1084437"/>
<dbReference type="GeneID" id="45024727"/>
<dbReference type="KEGG" id="ban:BA_5122"/>
<dbReference type="KEGG" id="bar:GBAA_5122"/>
<dbReference type="KEGG" id="bat:BAS4760"/>
<dbReference type="PATRIC" id="fig|198094.11.peg.5083"/>
<dbReference type="eggNOG" id="COG0448">
    <property type="taxonomic scope" value="Bacteria"/>
</dbReference>
<dbReference type="HOGENOM" id="CLU_029499_14_0_9"/>
<dbReference type="OMA" id="YPLTKMR"/>
<dbReference type="OrthoDB" id="9801810at2"/>
<dbReference type="UniPathway" id="UPA00164"/>
<dbReference type="Proteomes" id="UP000000427">
    <property type="component" value="Chromosome"/>
</dbReference>
<dbReference type="Proteomes" id="UP000000594">
    <property type="component" value="Chromosome"/>
</dbReference>
<dbReference type="GO" id="GO:0005524">
    <property type="term" value="F:ATP binding"/>
    <property type="evidence" value="ECO:0007669"/>
    <property type="project" value="UniProtKB-KW"/>
</dbReference>
<dbReference type="GO" id="GO:0008878">
    <property type="term" value="F:glucose-1-phosphate adenylyltransferase activity"/>
    <property type="evidence" value="ECO:0007669"/>
    <property type="project" value="UniProtKB-UniRule"/>
</dbReference>
<dbReference type="GO" id="GO:0005978">
    <property type="term" value="P:glycogen biosynthetic process"/>
    <property type="evidence" value="ECO:0007669"/>
    <property type="project" value="UniProtKB-UniRule"/>
</dbReference>
<dbReference type="CDD" id="cd02508">
    <property type="entry name" value="ADP_Glucose_PP"/>
    <property type="match status" value="1"/>
</dbReference>
<dbReference type="CDD" id="cd04651">
    <property type="entry name" value="LbH_G1P_AT_C"/>
    <property type="match status" value="1"/>
</dbReference>
<dbReference type="FunFam" id="2.160.10.10:FF:000022">
    <property type="entry name" value="Glucose-1-phosphate adenylyltransferase"/>
    <property type="match status" value="1"/>
</dbReference>
<dbReference type="FunFam" id="3.90.550.10:FF:000083">
    <property type="entry name" value="Glucose-1-phosphate adenylyltransferase"/>
    <property type="match status" value="1"/>
</dbReference>
<dbReference type="Gene3D" id="2.160.10.10">
    <property type="entry name" value="Hexapeptide repeat proteins"/>
    <property type="match status" value="1"/>
</dbReference>
<dbReference type="Gene3D" id="3.90.550.10">
    <property type="entry name" value="Spore Coat Polysaccharide Biosynthesis Protein SpsA, Chain A"/>
    <property type="match status" value="1"/>
</dbReference>
<dbReference type="HAMAP" id="MF_00624">
    <property type="entry name" value="GlgC"/>
    <property type="match status" value="1"/>
</dbReference>
<dbReference type="InterPro" id="IPR011831">
    <property type="entry name" value="ADP-Glc_PPase"/>
</dbReference>
<dbReference type="InterPro" id="IPR005836">
    <property type="entry name" value="ADP_Glu_pyroP_CS"/>
</dbReference>
<dbReference type="InterPro" id="IPR023049">
    <property type="entry name" value="GlgC_bac"/>
</dbReference>
<dbReference type="InterPro" id="IPR056818">
    <property type="entry name" value="GlmU/GlgC-like_hexapep"/>
</dbReference>
<dbReference type="InterPro" id="IPR005835">
    <property type="entry name" value="NTP_transferase_dom"/>
</dbReference>
<dbReference type="InterPro" id="IPR029044">
    <property type="entry name" value="Nucleotide-diphossugar_trans"/>
</dbReference>
<dbReference type="InterPro" id="IPR011004">
    <property type="entry name" value="Trimer_LpxA-like_sf"/>
</dbReference>
<dbReference type="NCBIfam" id="TIGR02091">
    <property type="entry name" value="glgC"/>
    <property type="match status" value="1"/>
</dbReference>
<dbReference type="NCBIfam" id="NF003670">
    <property type="entry name" value="PRK05293.1"/>
    <property type="match status" value="1"/>
</dbReference>
<dbReference type="PANTHER" id="PTHR43523:SF2">
    <property type="entry name" value="GLUCOSE-1-PHOSPHATE ADENYLYLTRANSFERASE"/>
    <property type="match status" value="1"/>
</dbReference>
<dbReference type="PANTHER" id="PTHR43523">
    <property type="entry name" value="GLUCOSE-1-PHOSPHATE ADENYLYLTRANSFERASE-RELATED"/>
    <property type="match status" value="1"/>
</dbReference>
<dbReference type="Pfam" id="PF24894">
    <property type="entry name" value="Hexapep_GlmU"/>
    <property type="match status" value="1"/>
</dbReference>
<dbReference type="Pfam" id="PF00483">
    <property type="entry name" value="NTP_transferase"/>
    <property type="match status" value="1"/>
</dbReference>
<dbReference type="SUPFAM" id="SSF53448">
    <property type="entry name" value="Nucleotide-diphospho-sugar transferases"/>
    <property type="match status" value="1"/>
</dbReference>
<dbReference type="SUPFAM" id="SSF51161">
    <property type="entry name" value="Trimeric LpxA-like enzymes"/>
    <property type="match status" value="1"/>
</dbReference>
<dbReference type="PROSITE" id="PS00808">
    <property type="entry name" value="ADP_GLC_PYROPHOSPH_1"/>
    <property type="match status" value="1"/>
</dbReference>
<dbReference type="PROSITE" id="PS00809">
    <property type="entry name" value="ADP_GLC_PYROPHOSPH_2"/>
    <property type="match status" value="1"/>
</dbReference>
<keyword id="KW-0067">ATP-binding</keyword>
<keyword id="KW-0119">Carbohydrate metabolism</keyword>
<keyword id="KW-0320">Glycogen biosynthesis</keyword>
<keyword id="KW-0321">Glycogen metabolism</keyword>
<keyword id="KW-0547">Nucleotide-binding</keyword>
<keyword id="KW-0548">Nucleotidyltransferase</keyword>
<keyword id="KW-1185">Reference proteome</keyword>
<keyword id="KW-0808">Transferase</keyword>
<evidence type="ECO:0000255" key="1">
    <source>
        <dbReference type="HAMAP-Rule" id="MF_00624"/>
    </source>
</evidence>